<reference key="1">
    <citation type="journal article" date="2005" name="BMC Biol.">
        <title>The sequence of rice chromosomes 11 and 12, rich in disease resistance genes and recent gene duplications.</title>
        <authorList>
            <consortium name="The rice chromosomes 11 and 12 sequencing consortia"/>
        </authorList>
    </citation>
    <scope>NUCLEOTIDE SEQUENCE [LARGE SCALE GENOMIC DNA]</scope>
    <source>
        <strain>cv. Nipponbare</strain>
    </source>
</reference>
<reference key="2">
    <citation type="journal article" date="2005" name="Nature">
        <title>The map-based sequence of the rice genome.</title>
        <authorList>
            <consortium name="International rice genome sequencing project (IRGSP)"/>
        </authorList>
    </citation>
    <scope>NUCLEOTIDE SEQUENCE [LARGE SCALE GENOMIC DNA]</scope>
    <source>
        <strain>cv. Nipponbare</strain>
    </source>
</reference>
<reference key="3">
    <citation type="journal article" date="2008" name="Nucleic Acids Res.">
        <title>The rice annotation project database (RAP-DB): 2008 update.</title>
        <authorList>
            <consortium name="The rice annotation project (RAP)"/>
        </authorList>
    </citation>
    <scope>GENOME REANNOTATION</scope>
    <source>
        <strain>cv. Nipponbare</strain>
    </source>
</reference>
<reference key="4">
    <citation type="journal article" date="2013" name="Rice">
        <title>Improvement of the Oryza sativa Nipponbare reference genome using next generation sequence and optical map data.</title>
        <authorList>
            <person name="Kawahara Y."/>
            <person name="de la Bastide M."/>
            <person name="Hamilton J.P."/>
            <person name="Kanamori H."/>
            <person name="McCombie W.R."/>
            <person name="Ouyang S."/>
            <person name="Schwartz D.C."/>
            <person name="Tanaka T."/>
            <person name="Wu J."/>
            <person name="Zhou S."/>
            <person name="Childs K.L."/>
            <person name="Davidson R.M."/>
            <person name="Lin H."/>
            <person name="Quesada-Ocampo L."/>
            <person name="Vaillancourt B."/>
            <person name="Sakai H."/>
            <person name="Lee S.S."/>
            <person name="Kim J."/>
            <person name="Numa H."/>
            <person name="Itoh T."/>
            <person name="Buell C.R."/>
            <person name="Matsumoto T."/>
        </authorList>
    </citation>
    <scope>GENOME REANNOTATION</scope>
    <source>
        <strain>cv. Nipponbare</strain>
    </source>
</reference>
<reference key="5">
    <citation type="journal article" date="2005" name="PLoS Biol.">
        <title>The genomes of Oryza sativa: a history of duplications.</title>
        <authorList>
            <person name="Yu J."/>
            <person name="Wang J."/>
            <person name="Lin W."/>
            <person name="Li S."/>
            <person name="Li H."/>
            <person name="Zhou J."/>
            <person name="Ni P."/>
            <person name="Dong W."/>
            <person name="Hu S."/>
            <person name="Zeng C."/>
            <person name="Zhang J."/>
            <person name="Zhang Y."/>
            <person name="Li R."/>
            <person name="Xu Z."/>
            <person name="Li S."/>
            <person name="Li X."/>
            <person name="Zheng H."/>
            <person name="Cong L."/>
            <person name="Lin L."/>
            <person name="Yin J."/>
            <person name="Geng J."/>
            <person name="Li G."/>
            <person name="Shi J."/>
            <person name="Liu J."/>
            <person name="Lv H."/>
            <person name="Li J."/>
            <person name="Wang J."/>
            <person name="Deng Y."/>
            <person name="Ran L."/>
            <person name="Shi X."/>
            <person name="Wang X."/>
            <person name="Wu Q."/>
            <person name="Li C."/>
            <person name="Ren X."/>
            <person name="Wang J."/>
            <person name="Wang X."/>
            <person name="Li D."/>
            <person name="Liu D."/>
            <person name="Zhang X."/>
            <person name="Ji Z."/>
            <person name="Zhao W."/>
            <person name="Sun Y."/>
            <person name="Zhang Z."/>
            <person name="Bao J."/>
            <person name="Han Y."/>
            <person name="Dong L."/>
            <person name="Ji J."/>
            <person name="Chen P."/>
            <person name="Wu S."/>
            <person name="Liu J."/>
            <person name="Xiao Y."/>
            <person name="Bu D."/>
            <person name="Tan J."/>
            <person name="Yang L."/>
            <person name="Ye C."/>
            <person name="Zhang J."/>
            <person name="Xu J."/>
            <person name="Zhou Y."/>
            <person name="Yu Y."/>
            <person name="Zhang B."/>
            <person name="Zhuang S."/>
            <person name="Wei H."/>
            <person name="Liu B."/>
            <person name="Lei M."/>
            <person name="Yu H."/>
            <person name="Li Y."/>
            <person name="Xu H."/>
            <person name="Wei S."/>
            <person name="He X."/>
            <person name="Fang L."/>
            <person name="Zhang Z."/>
            <person name="Zhang Y."/>
            <person name="Huang X."/>
            <person name="Su Z."/>
            <person name="Tong W."/>
            <person name="Li J."/>
            <person name="Tong Z."/>
            <person name="Li S."/>
            <person name="Ye J."/>
            <person name="Wang L."/>
            <person name="Fang L."/>
            <person name="Lei T."/>
            <person name="Chen C.-S."/>
            <person name="Chen H.-C."/>
            <person name="Xu Z."/>
            <person name="Li H."/>
            <person name="Huang H."/>
            <person name="Zhang F."/>
            <person name="Xu H."/>
            <person name="Li N."/>
            <person name="Zhao C."/>
            <person name="Li S."/>
            <person name="Dong L."/>
            <person name="Huang Y."/>
            <person name="Li L."/>
            <person name="Xi Y."/>
            <person name="Qi Q."/>
            <person name="Li W."/>
            <person name="Zhang B."/>
            <person name="Hu W."/>
            <person name="Zhang Y."/>
            <person name="Tian X."/>
            <person name="Jiao Y."/>
            <person name="Liang X."/>
            <person name="Jin J."/>
            <person name="Gao L."/>
            <person name="Zheng W."/>
            <person name="Hao B."/>
            <person name="Liu S.-M."/>
            <person name="Wang W."/>
            <person name="Yuan L."/>
            <person name="Cao M."/>
            <person name="McDermott J."/>
            <person name="Samudrala R."/>
            <person name="Wang J."/>
            <person name="Wong G.K.-S."/>
            <person name="Yang H."/>
        </authorList>
    </citation>
    <scope>NUCLEOTIDE SEQUENCE [LARGE SCALE GENOMIC DNA]</scope>
    <source>
        <strain>cv. Nipponbare</strain>
    </source>
</reference>
<reference key="6">
    <citation type="journal article" date="2003" name="Science">
        <title>Collection, mapping, and annotation of over 28,000 cDNA clones from japonica rice.</title>
        <authorList>
            <consortium name="The rice full-length cDNA consortium"/>
        </authorList>
    </citation>
    <scope>NUCLEOTIDE SEQUENCE [LARGE SCALE MRNA]</scope>
    <source>
        <strain>cv. Nipponbare</strain>
    </source>
</reference>
<reference key="7">
    <citation type="journal article" date="2014" name="Plant Physiol.">
        <title>Functional and evolutionary analysis of the CASPARIAN STRIP MEMBRANE DOMAIN PROTEIN family.</title>
        <authorList>
            <person name="Roppolo D."/>
            <person name="Boeckmann B."/>
            <person name="Pfister A."/>
            <person name="Boutet E."/>
            <person name="Rubio M.C."/>
            <person name="Denervaud-Tendon V."/>
            <person name="Vermeer J.E."/>
            <person name="Gheyselinck J."/>
            <person name="Xenarios I."/>
            <person name="Geldner N."/>
        </authorList>
    </citation>
    <scope>GENE FAMILY</scope>
    <scope>NOMENCLATURE</scope>
</reference>
<feature type="chain" id="PRO_0000370293" description="CASP-like protein 1B1">
    <location>
        <begin position="1"/>
        <end position="195"/>
    </location>
</feature>
<feature type="topological domain" description="Cytoplasmic" evidence="2">
    <location>
        <begin position="1"/>
        <end position="25"/>
    </location>
</feature>
<feature type="transmembrane region" description="Helical" evidence="2">
    <location>
        <begin position="26"/>
        <end position="46"/>
    </location>
</feature>
<feature type="topological domain" description="Extracellular" evidence="2">
    <location>
        <begin position="47"/>
        <end position="78"/>
    </location>
</feature>
<feature type="transmembrane region" description="Helical" evidence="2">
    <location>
        <begin position="79"/>
        <end position="99"/>
    </location>
</feature>
<feature type="topological domain" description="Cytoplasmic" evidence="2">
    <location>
        <begin position="100"/>
        <end position="114"/>
    </location>
</feature>
<feature type="transmembrane region" description="Helical" evidence="2">
    <location>
        <begin position="115"/>
        <end position="135"/>
    </location>
</feature>
<feature type="topological domain" description="Extracellular" evidence="2">
    <location>
        <begin position="136"/>
        <end position="160"/>
    </location>
</feature>
<feature type="transmembrane region" description="Helical" evidence="2">
    <location>
        <begin position="161"/>
        <end position="181"/>
    </location>
</feature>
<feature type="topological domain" description="Cytoplasmic" evidence="2">
    <location>
        <begin position="182"/>
        <end position="195"/>
    </location>
</feature>
<name>CSPL6_ORYSJ</name>
<dbReference type="EMBL" id="DP000011">
    <property type="protein sequence ID" value="ABA99368.1"/>
    <property type="status" value="ALT_SEQ"/>
    <property type="molecule type" value="Genomic_DNA"/>
</dbReference>
<dbReference type="EMBL" id="AP008218">
    <property type="protein sequence ID" value="BAF30268.1"/>
    <property type="molecule type" value="Genomic_DNA"/>
</dbReference>
<dbReference type="EMBL" id="AP014968">
    <property type="protein sequence ID" value="BAT18033.1"/>
    <property type="molecule type" value="Genomic_DNA"/>
</dbReference>
<dbReference type="EMBL" id="CM000149">
    <property type="protein sequence ID" value="EEE53590.1"/>
    <property type="status" value="ALT_INIT"/>
    <property type="molecule type" value="Genomic_DNA"/>
</dbReference>
<dbReference type="EMBL" id="AK073789">
    <property type="status" value="NOT_ANNOTATED_CDS"/>
    <property type="molecule type" value="mRNA"/>
</dbReference>
<dbReference type="RefSeq" id="XP_015618988.1">
    <property type="nucleotide sequence ID" value="XM_015763502.1"/>
</dbReference>
<dbReference type="SMR" id="Q0ILZ7"/>
<dbReference type="FunCoup" id="Q0ILZ7">
    <property type="interactions" value="724"/>
</dbReference>
<dbReference type="PaxDb" id="39947-Q0ILZ7"/>
<dbReference type="EnsemblPlants" id="Os12t0610800-01">
    <property type="protein sequence ID" value="Os12t0610800-01"/>
    <property type="gene ID" value="Os12g0610800"/>
</dbReference>
<dbReference type="Gramene" id="Os12t0610800-01">
    <property type="protein sequence ID" value="Os12t0610800-01"/>
    <property type="gene ID" value="Os12g0610800"/>
</dbReference>
<dbReference type="KEGG" id="dosa:Os12g0610800"/>
<dbReference type="eggNOG" id="ENOG502RYH6">
    <property type="taxonomic scope" value="Eukaryota"/>
</dbReference>
<dbReference type="HOGENOM" id="CLU_066104_1_0_1"/>
<dbReference type="InParanoid" id="Q0ILZ7"/>
<dbReference type="OMA" id="EMEFTSF"/>
<dbReference type="OrthoDB" id="610574at2759"/>
<dbReference type="Proteomes" id="UP000000763">
    <property type="component" value="Chromosome 12"/>
</dbReference>
<dbReference type="Proteomes" id="UP000007752">
    <property type="component" value="Chromosome 12"/>
</dbReference>
<dbReference type="Proteomes" id="UP000059680">
    <property type="component" value="Chromosome 12"/>
</dbReference>
<dbReference type="ExpressionAtlas" id="Q0ILZ7">
    <property type="expression patterns" value="baseline and differential"/>
</dbReference>
<dbReference type="GO" id="GO:0005886">
    <property type="term" value="C:plasma membrane"/>
    <property type="evidence" value="ECO:0000318"/>
    <property type="project" value="GO_Central"/>
</dbReference>
<dbReference type="InterPro" id="IPR006459">
    <property type="entry name" value="CASP/CASPL"/>
</dbReference>
<dbReference type="InterPro" id="IPR006702">
    <property type="entry name" value="CASP_dom"/>
</dbReference>
<dbReference type="InterPro" id="IPR044173">
    <property type="entry name" value="CASPL"/>
</dbReference>
<dbReference type="NCBIfam" id="TIGR01569">
    <property type="entry name" value="A_tha_TIGR01569"/>
    <property type="match status" value="1"/>
</dbReference>
<dbReference type="PANTHER" id="PTHR36488">
    <property type="entry name" value="CASP-LIKE PROTEIN 1U1"/>
    <property type="match status" value="1"/>
</dbReference>
<dbReference type="PANTHER" id="PTHR36488:SF8">
    <property type="entry name" value="CASP-LIKE PROTEIN 1U1"/>
    <property type="match status" value="1"/>
</dbReference>
<dbReference type="Pfam" id="PF04535">
    <property type="entry name" value="CASP_dom"/>
    <property type="match status" value="1"/>
</dbReference>
<evidence type="ECO:0000250" key="1"/>
<evidence type="ECO:0000255" key="2"/>
<evidence type="ECO:0000305" key="3"/>
<organism>
    <name type="scientific">Oryza sativa subsp. japonica</name>
    <name type="common">Rice</name>
    <dbReference type="NCBI Taxonomy" id="39947"/>
    <lineage>
        <taxon>Eukaryota</taxon>
        <taxon>Viridiplantae</taxon>
        <taxon>Streptophyta</taxon>
        <taxon>Embryophyta</taxon>
        <taxon>Tracheophyta</taxon>
        <taxon>Spermatophyta</taxon>
        <taxon>Magnoliopsida</taxon>
        <taxon>Liliopsida</taxon>
        <taxon>Poales</taxon>
        <taxon>Poaceae</taxon>
        <taxon>BOP clade</taxon>
        <taxon>Oryzoideae</taxon>
        <taxon>Oryzeae</taxon>
        <taxon>Oryzinae</taxon>
        <taxon>Oryza</taxon>
        <taxon>Oryza sativa</taxon>
    </lineage>
</organism>
<accession>Q0ILZ7</accession>
<accession>A0A0P0YCK9</accession>
<accession>B9GE83</accession>
<accession>Q2QMB4</accession>
<proteinExistence type="evidence at transcript level"/>
<gene>
    <name type="ordered locus">Os12g0610800</name>
    <name type="ordered locus">LOC_Os12g41690</name>
    <name type="ORF">OsJ_035393</name>
    <name type="ORF">OsJ_36834</name>
</gene>
<keyword id="KW-1003">Cell membrane</keyword>
<keyword id="KW-0472">Membrane</keyword>
<keyword id="KW-1185">Reference proteome</keyword>
<keyword id="KW-0812">Transmembrane</keyword>
<keyword id="KW-1133">Transmembrane helix</keyword>
<sequence length="195" mass="20765">MDLEKGKKPSEQAAACRIMQVKDKLITLQPVVRACVFLATAVAAVIMGLNKQSYTTVVAIVGTRPVTQTFTAKFKDTPAFVFFVIANAIASGYNLMVLVTRRILQRRAQSLSVHLLDMVILTLLATGSATAASMAQLGKNGNLHARWNPICDKFGSFCNHGGIALVSSFIGVALMLALNLLSAAANSPRSNVTGQ</sequence>
<protein>
    <recommendedName>
        <fullName>CASP-like protein 1B1</fullName>
        <shortName>OsCASPL1B1</shortName>
    </recommendedName>
</protein>
<comment type="subunit">
    <text evidence="1">Homodimer and heterodimers.</text>
</comment>
<comment type="subcellular location">
    <subcellularLocation>
        <location evidence="1">Cell membrane</location>
        <topology evidence="1">Multi-pass membrane protein</topology>
    </subcellularLocation>
</comment>
<comment type="similarity">
    <text evidence="3">Belongs to the Casparian strip membrane proteins (CASP) family.</text>
</comment>
<comment type="sequence caution" evidence="3">
    <conflict type="erroneous gene model prediction">
        <sequence resource="EMBL-CDS" id="ABA99368"/>
    </conflict>
</comment>
<comment type="sequence caution" evidence="3">
    <conflict type="erroneous initiation">
        <sequence resource="EMBL-CDS" id="EEE53590"/>
    </conflict>
    <text>Extended N-terminus.</text>
</comment>